<sequence length="118" mass="12808">MHRCVGGVCVSLIVCAFLTETLGMVIAAKEKRGWTLNSAGYLLGPHAIDSHRSLSDKHGLAGKREMPLDEDFKTGALRIADEDVVHTIIDFLSYLKLKEIGALDSLPSSLTSEEISQP</sequence>
<keyword id="KW-0025">Alternative splicing</keyword>
<keyword id="KW-0027">Amidation</keyword>
<keyword id="KW-0165">Cleavage on pair of basic residues</keyword>
<keyword id="KW-0372">Hormone</keyword>
<keyword id="KW-0527">Neuropeptide</keyword>
<keyword id="KW-1185">Reference proteome</keyword>
<keyword id="KW-0964">Secreted</keyword>
<keyword id="KW-0732">Signal</keyword>
<accession>E7EZ53</accession>
<proteinExistence type="evidence at protein level"/>
<gene>
    <name evidence="8" type="primary">gal</name>
    <name evidence="9" type="synonym">galn</name>
    <name evidence="8" type="synonym">ppg</name>
</gene>
<protein>
    <recommendedName>
        <fullName evidence="2">Galanin peptides</fullName>
    </recommendedName>
    <component>
        <recommendedName>
            <fullName evidence="8">Galanin</fullName>
        </recommendedName>
    </component>
    <component>
        <recommendedName>
            <fullName evidence="8">Galanin message-associated peptide</fullName>
        </recommendedName>
    </component>
</protein>
<organism>
    <name type="scientific">Danio rerio</name>
    <name type="common">Zebrafish</name>
    <name type="synonym">Brachydanio rerio</name>
    <dbReference type="NCBI Taxonomy" id="7955"/>
    <lineage>
        <taxon>Eukaryota</taxon>
        <taxon>Metazoa</taxon>
        <taxon>Chordata</taxon>
        <taxon>Craniata</taxon>
        <taxon>Vertebrata</taxon>
        <taxon>Euteleostomi</taxon>
        <taxon>Actinopterygii</taxon>
        <taxon>Neopterygii</taxon>
        <taxon>Teleostei</taxon>
        <taxon>Ostariophysi</taxon>
        <taxon>Cypriniformes</taxon>
        <taxon>Danionidae</taxon>
        <taxon>Danioninae</taxon>
        <taxon>Danio</taxon>
    </lineage>
</organism>
<name>GALA_DANRE</name>
<reference evidence="9" key="1">
    <citation type="journal article" date="2012" name="J. Comp. Neurol.">
        <title>Galanin gene expression and effects of its knock-down on the development of the nervous system in larval zebrafish.</title>
        <authorList>
            <person name="Podlasz P."/>
            <person name="Sallinen V."/>
            <person name="Chen Y.C."/>
            <person name="Kudo H."/>
            <person name="Fedorowska N."/>
            <person name="Panula P."/>
        </authorList>
    </citation>
    <scope>NUCLEOTIDE SEQUENCE [MRNA] (ISOFORMS A AND B)</scope>
    <scope>TISSUE SPECIFICITY</scope>
    <scope>DEVELOPMENTAL STAGE</scope>
    <source>
        <strain evidence="5">Turku</strain>
        <tissue evidence="5">Brain</tissue>
    </source>
</reference>
<reference key="2">
    <citation type="journal article" date="2013" name="Nature">
        <title>The zebrafish reference genome sequence and its relationship to the human genome.</title>
        <authorList>
            <person name="Howe K."/>
            <person name="Clark M.D."/>
            <person name="Torroja C.F."/>
            <person name="Torrance J."/>
            <person name="Berthelot C."/>
            <person name="Muffato M."/>
            <person name="Collins J.E."/>
            <person name="Humphray S."/>
            <person name="McLaren K."/>
            <person name="Matthews L."/>
            <person name="McLaren S."/>
            <person name="Sealy I."/>
            <person name="Caccamo M."/>
            <person name="Churcher C."/>
            <person name="Scott C."/>
            <person name="Barrett J.C."/>
            <person name="Koch R."/>
            <person name="Rauch G.J."/>
            <person name="White S."/>
            <person name="Chow W."/>
            <person name="Kilian B."/>
            <person name="Quintais L.T."/>
            <person name="Guerra-Assuncao J.A."/>
            <person name="Zhou Y."/>
            <person name="Gu Y."/>
            <person name="Yen J."/>
            <person name="Vogel J.H."/>
            <person name="Eyre T."/>
            <person name="Redmond S."/>
            <person name="Banerjee R."/>
            <person name="Chi J."/>
            <person name="Fu B."/>
            <person name="Langley E."/>
            <person name="Maguire S.F."/>
            <person name="Laird G.K."/>
            <person name="Lloyd D."/>
            <person name="Kenyon E."/>
            <person name="Donaldson S."/>
            <person name="Sehra H."/>
            <person name="Almeida-King J."/>
            <person name="Loveland J."/>
            <person name="Trevanion S."/>
            <person name="Jones M."/>
            <person name="Quail M."/>
            <person name="Willey D."/>
            <person name="Hunt A."/>
            <person name="Burton J."/>
            <person name="Sims S."/>
            <person name="McLay K."/>
            <person name="Plumb B."/>
            <person name="Davis J."/>
            <person name="Clee C."/>
            <person name="Oliver K."/>
            <person name="Clark R."/>
            <person name="Riddle C."/>
            <person name="Elliot D."/>
            <person name="Threadgold G."/>
            <person name="Harden G."/>
            <person name="Ware D."/>
            <person name="Begum S."/>
            <person name="Mortimore B."/>
            <person name="Kerry G."/>
            <person name="Heath P."/>
            <person name="Phillimore B."/>
            <person name="Tracey A."/>
            <person name="Corby N."/>
            <person name="Dunn M."/>
            <person name="Johnson C."/>
            <person name="Wood J."/>
            <person name="Clark S."/>
            <person name="Pelan S."/>
            <person name="Griffiths G."/>
            <person name="Smith M."/>
            <person name="Glithero R."/>
            <person name="Howden P."/>
            <person name="Barker N."/>
            <person name="Lloyd C."/>
            <person name="Stevens C."/>
            <person name="Harley J."/>
            <person name="Holt K."/>
            <person name="Panagiotidis G."/>
            <person name="Lovell J."/>
            <person name="Beasley H."/>
            <person name="Henderson C."/>
            <person name="Gordon D."/>
            <person name="Auger K."/>
            <person name="Wright D."/>
            <person name="Collins J."/>
            <person name="Raisen C."/>
            <person name="Dyer L."/>
            <person name="Leung K."/>
            <person name="Robertson L."/>
            <person name="Ambridge K."/>
            <person name="Leongamornlert D."/>
            <person name="McGuire S."/>
            <person name="Gilderthorp R."/>
            <person name="Griffiths C."/>
            <person name="Manthravadi D."/>
            <person name="Nichol S."/>
            <person name="Barker G."/>
            <person name="Whitehead S."/>
            <person name="Kay M."/>
            <person name="Brown J."/>
            <person name="Murnane C."/>
            <person name="Gray E."/>
            <person name="Humphries M."/>
            <person name="Sycamore N."/>
            <person name="Barker D."/>
            <person name="Saunders D."/>
            <person name="Wallis J."/>
            <person name="Babbage A."/>
            <person name="Hammond S."/>
            <person name="Mashreghi-Mohammadi M."/>
            <person name="Barr L."/>
            <person name="Martin S."/>
            <person name="Wray P."/>
            <person name="Ellington A."/>
            <person name="Matthews N."/>
            <person name="Ellwood M."/>
            <person name="Woodmansey R."/>
            <person name="Clark G."/>
            <person name="Cooper J."/>
            <person name="Tromans A."/>
            <person name="Grafham D."/>
            <person name="Skuce C."/>
            <person name="Pandian R."/>
            <person name="Andrews R."/>
            <person name="Harrison E."/>
            <person name="Kimberley A."/>
            <person name="Garnett J."/>
            <person name="Fosker N."/>
            <person name="Hall R."/>
            <person name="Garner P."/>
            <person name="Kelly D."/>
            <person name="Bird C."/>
            <person name="Palmer S."/>
            <person name="Gehring I."/>
            <person name="Berger A."/>
            <person name="Dooley C.M."/>
            <person name="Ersan-Urun Z."/>
            <person name="Eser C."/>
            <person name="Geiger H."/>
            <person name="Geisler M."/>
            <person name="Karotki L."/>
            <person name="Kirn A."/>
            <person name="Konantz J."/>
            <person name="Konantz M."/>
            <person name="Oberlander M."/>
            <person name="Rudolph-Geiger S."/>
            <person name="Teucke M."/>
            <person name="Lanz C."/>
            <person name="Raddatz G."/>
            <person name="Osoegawa K."/>
            <person name="Zhu B."/>
            <person name="Rapp A."/>
            <person name="Widaa S."/>
            <person name="Langford C."/>
            <person name="Yang F."/>
            <person name="Schuster S.C."/>
            <person name="Carter N.P."/>
            <person name="Harrow J."/>
            <person name="Ning Z."/>
            <person name="Herrero J."/>
            <person name="Searle S.M."/>
            <person name="Enright A."/>
            <person name="Geisler R."/>
            <person name="Plasterk R.H."/>
            <person name="Lee C."/>
            <person name="Westerfield M."/>
            <person name="de Jong P.J."/>
            <person name="Zon L.I."/>
            <person name="Postlethwait J.H."/>
            <person name="Nusslein-Volhard C."/>
            <person name="Hubbard T.J."/>
            <person name="Roest Crollius H."/>
            <person name="Rogers J."/>
            <person name="Stemple D.L."/>
        </authorList>
    </citation>
    <scope>NUCLEOTIDE SEQUENCE [LARGE SCALE GENOMIC DNA]</scope>
    <source>
        <strain>Tuebingen</strain>
    </source>
</reference>
<reference key="3">
    <citation type="journal article" date="2016" name="Neurosci. Lett.">
        <title>Distribution of galanin receptor 2b neurons and interaction with galanin in the zebrafish central nervous system.</title>
        <authorList>
            <person name="Kim E."/>
            <person name="Jeong I."/>
            <person name="Kim S."/>
            <person name="Kim H.K."/>
            <person name="Lee D.W."/>
            <person name="Kim B."/>
            <person name="Seong J.Y."/>
            <person name="Bae Y.K."/>
            <person name="Ryu J.H."/>
            <person name="Park H.C."/>
        </authorList>
    </citation>
    <scope>SUBCELLULAR LOCATION</scope>
    <scope>DEVELOPMENTAL STAGE</scope>
</reference>
<reference key="4">
    <citation type="journal article" date="2019" name="Sci. Rep.">
        <title>Distribution and neuronal circuit of spexin 1/2 neurons in the zebrafish CNS.</title>
        <authorList>
            <person name="Kim E."/>
            <person name="Jeong I."/>
            <person name="Chung A.Y."/>
            <person name="Kim S."/>
            <person name="Kwon S.H."/>
            <person name="Seong J.Y."/>
            <person name="Park H.C."/>
        </authorList>
    </citation>
    <scope>SUBCELLULAR LOCATION</scope>
    <scope>DEVELOPMENTAL STAGE</scope>
</reference>
<evidence type="ECO:0000250" key="1">
    <source>
        <dbReference type="UniProtKB" id="P07480"/>
    </source>
</evidence>
<evidence type="ECO:0000250" key="2">
    <source>
        <dbReference type="UniProtKB" id="P22466"/>
    </source>
</evidence>
<evidence type="ECO:0000250" key="3">
    <source>
        <dbReference type="UniProtKB" id="P47214"/>
    </source>
</evidence>
<evidence type="ECO:0000255" key="4"/>
<evidence type="ECO:0000269" key="5">
    <source>
    </source>
</evidence>
<evidence type="ECO:0000269" key="6">
    <source>
    </source>
</evidence>
<evidence type="ECO:0000269" key="7">
    <source>
    </source>
</evidence>
<evidence type="ECO:0000303" key="8">
    <source>
    </source>
</evidence>
<evidence type="ECO:0000305" key="9"/>
<feature type="signal peptide" evidence="4">
    <location>
        <begin position="1"/>
        <end position="19"/>
    </location>
</feature>
<feature type="propeptide" id="PRO_0000424351" evidence="2">
    <location>
        <begin position="20"/>
        <end position="30"/>
    </location>
</feature>
<feature type="peptide" id="PRO_0000424352" description="Galanin" evidence="2">
    <location>
        <begin position="33"/>
        <end position="61"/>
    </location>
</feature>
<feature type="peptide" id="PRO_0000424353" description="Galanin message-associated peptide" evidence="2">
    <location>
        <begin position="65"/>
        <end position="118"/>
    </location>
</feature>
<feature type="modified residue" description="Alanine amide" evidence="3">
    <location>
        <position position="61"/>
    </location>
</feature>
<feature type="splice variant" id="VSP_053398" description="In isoform B." evidence="8">
    <original>PH</original>
    <variation>PRRIDHLIQIKDTPSARGREDLLGQY</variation>
    <location>
        <begin position="45"/>
        <end position="46"/>
    </location>
</feature>
<comment type="function">
    <text evidence="1 2">Endocrine hormone of the central and peripheral nervous systems that binds and activates the G protein-coupled receptors GALR1 (galr1a and galr1b) and GALR2 (galr2a and galr2b). This small neuropeptide may regulate diverse physiologic functions including contraction of smooth muscle of the gastrointestinal and genitourinary tract, growth hormone and insulin release and adrenal secretion.</text>
</comment>
<comment type="subcellular location">
    <subcellularLocation>
        <location evidence="1">Secreted</location>
    </subcellularLocation>
</comment>
<comment type="alternative products">
    <event type="alternative splicing"/>
    <isoform>
        <id>E7EZ53-1</id>
        <name evidence="5">A</name>
        <sequence type="displayed"/>
    </isoform>
    <isoform>
        <id>E7EZ53-2</id>
        <name evidence="5">B</name>
        <sequence type="described" ref="VSP_053398"/>
    </isoform>
</comment>
<comment type="tissue specificity">
    <text evidence="5">Strongly expressed in brain and stomach, moderately in the eye, and very weakly in heart, kidney and gills. Not detected in liver.</text>
</comment>
<comment type="developmental stage">
    <text evidence="5 6 7">In embryos and larvae, detected mainly in nerve cells in the preoptic-hypothalamic regions and fibers innervating several brain regions (at protein level) (PubMed:22522977, PubMed:27315774). In embryos, detected in the anterior commissure, postoptic commissure, hypothalamus, pituitary gland, ventral hindbrain and the white matter of the ventral spinal cord (at protein level) (PubMed:27315774, PubMed:30903017). In larvae, detected in brain regions including telencephalon, hypothalamus, mesencephalon, medulla oblongata and pituitary at 30 hpf onwards (at protein level) (PubMed:22522977). Both isoforms are maternally expressed and detected throughout embryonic development (PubMed:22522977). Low-level expression detected throughout the developing embryo at 6-24 hours post-fertilization (hpf) with more focused expression detected in specific groups of neurons in the brain at 28 hpf onwards (PubMed:22522977).</text>
</comment>
<comment type="similarity">
    <text evidence="4">Belongs to the galanin family.</text>
</comment>
<dbReference type="EMBL" id="CR391967">
    <property type="status" value="NOT_ANNOTATED_CDS"/>
    <property type="molecule type" value="Genomic_DNA"/>
</dbReference>
<dbReference type="RefSeq" id="NP_001333168.1">
    <molecule id="E7EZ53-2"/>
    <property type="nucleotide sequence ID" value="NM_001346239.1"/>
</dbReference>
<dbReference type="RefSeq" id="XP_005163049.1">
    <molecule id="E7EZ53-1"/>
    <property type="nucleotide sequence ID" value="XM_005162992.5"/>
</dbReference>
<dbReference type="SMR" id="E7EZ53"/>
<dbReference type="FunCoup" id="E7EZ53">
    <property type="interactions" value="1439"/>
</dbReference>
<dbReference type="STRING" id="7955.ENSDARP00000128202"/>
<dbReference type="Ensembl" id="ENSDART00000190212">
    <molecule id="E7EZ53-1"/>
    <property type="protein sequence ID" value="ENSDARP00000154557"/>
    <property type="gene ID" value="ENSDARG00000091377"/>
</dbReference>
<dbReference type="GeneID" id="100006361"/>
<dbReference type="KEGG" id="dre:100006361"/>
<dbReference type="AGR" id="ZFIN:ZDB-GENE-111117-2"/>
<dbReference type="CTD" id="51083"/>
<dbReference type="ZFIN" id="ZDB-GENE-111117-2">
    <property type="gene designation" value="gal"/>
</dbReference>
<dbReference type="HOGENOM" id="CLU_166244_0_0_1"/>
<dbReference type="InParanoid" id="E7EZ53"/>
<dbReference type="OMA" id="PHAVDSH"/>
<dbReference type="OrthoDB" id="8721537at2759"/>
<dbReference type="TreeFam" id="TF335850"/>
<dbReference type="Reactome" id="R-DRE-375276">
    <property type="pathway name" value="Peptide ligand-binding receptors"/>
</dbReference>
<dbReference type="Reactome" id="R-DRE-418594">
    <property type="pathway name" value="G alpha (i) signalling events"/>
</dbReference>
<dbReference type="PRO" id="PR:E7EZ53"/>
<dbReference type="Proteomes" id="UP000000437">
    <property type="component" value="Chromosome 25"/>
</dbReference>
<dbReference type="Bgee" id="ENSDARG00000091377">
    <property type="expression patterns" value="Expressed in brain and 16 other cell types or tissues"/>
</dbReference>
<dbReference type="GO" id="GO:0005615">
    <property type="term" value="C:extracellular space"/>
    <property type="evidence" value="ECO:0000318"/>
    <property type="project" value="GO_Central"/>
</dbReference>
<dbReference type="GO" id="GO:0043025">
    <property type="term" value="C:neuronal cell body"/>
    <property type="evidence" value="ECO:0000314"/>
    <property type="project" value="UniProtKB"/>
</dbReference>
<dbReference type="GO" id="GO:0030141">
    <property type="term" value="C:secretory granule"/>
    <property type="evidence" value="ECO:0000318"/>
    <property type="project" value="GO_Central"/>
</dbReference>
<dbReference type="GO" id="GO:0004966">
    <property type="term" value="F:galanin receptor activity"/>
    <property type="evidence" value="ECO:0000250"/>
    <property type="project" value="UniProtKB"/>
</dbReference>
<dbReference type="GO" id="GO:0031763">
    <property type="term" value="F:galanin receptor binding"/>
    <property type="evidence" value="ECO:0000318"/>
    <property type="project" value="GO_Central"/>
</dbReference>
<dbReference type="GO" id="GO:0005184">
    <property type="term" value="F:neuropeptide hormone activity"/>
    <property type="evidence" value="ECO:0000250"/>
    <property type="project" value="UniProtKB"/>
</dbReference>
<dbReference type="GO" id="GO:0031764">
    <property type="term" value="F:type 1 galanin receptor binding"/>
    <property type="evidence" value="ECO:0000250"/>
    <property type="project" value="UniProtKB"/>
</dbReference>
<dbReference type="GO" id="GO:0031765">
    <property type="term" value="F:type 2 galanin receptor binding"/>
    <property type="evidence" value="ECO:0000250"/>
    <property type="project" value="UniProtKB"/>
</dbReference>
<dbReference type="GO" id="GO:0031766">
    <property type="term" value="F:type 3 galanin receptor binding"/>
    <property type="evidence" value="ECO:0000250"/>
    <property type="project" value="UniProtKB"/>
</dbReference>
<dbReference type="GO" id="GO:0007218">
    <property type="term" value="P:neuropeptide signaling pathway"/>
    <property type="evidence" value="ECO:0000318"/>
    <property type="project" value="GO_Central"/>
</dbReference>
<dbReference type="GO" id="GO:0045944">
    <property type="term" value="P:positive regulation of transcription by RNA polymerase II"/>
    <property type="evidence" value="ECO:0000250"/>
    <property type="project" value="UniProtKB"/>
</dbReference>
<dbReference type="GO" id="GO:0009416">
    <property type="term" value="P:response to light stimulus"/>
    <property type="evidence" value="ECO:0000316"/>
    <property type="project" value="ZFIN"/>
</dbReference>
<dbReference type="GO" id="GO:0009651">
    <property type="term" value="P:response to salt stress"/>
    <property type="evidence" value="ECO:0000315"/>
    <property type="project" value="ZFIN"/>
</dbReference>
<dbReference type="GO" id="GO:0030431">
    <property type="term" value="P:sleep"/>
    <property type="evidence" value="ECO:0000316"/>
    <property type="project" value="ZFIN"/>
</dbReference>
<dbReference type="InterPro" id="IPR008174">
    <property type="entry name" value="Galanin"/>
</dbReference>
<dbReference type="InterPro" id="IPR008175">
    <property type="entry name" value="Galanin_pre"/>
</dbReference>
<dbReference type="InterPro" id="IPR013068">
    <property type="entry name" value="GMAP"/>
</dbReference>
<dbReference type="PANTHER" id="PTHR16839">
    <property type="entry name" value="GALANIN"/>
    <property type="match status" value="1"/>
</dbReference>
<dbReference type="PANTHER" id="PTHR16839:SF1">
    <property type="entry name" value="GALANIN PEPTIDES"/>
    <property type="match status" value="1"/>
</dbReference>
<dbReference type="Pfam" id="PF01296">
    <property type="entry name" value="Galanin"/>
    <property type="match status" value="1"/>
</dbReference>
<dbReference type="Pfam" id="PF06540">
    <property type="entry name" value="GMAP"/>
    <property type="match status" value="1"/>
</dbReference>
<dbReference type="PRINTS" id="PR00273">
    <property type="entry name" value="GALANIN"/>
</dbReference>
<dbReference type="SMART" id="SM00071">
    <property type="entry name" value="Galanin"/>
    <property type="match status" value="1"/>
</dbReference>
<dbReference type="PROSITE" id="PS00861">
    <property type="entry name" value="GALANIN"/>
    <property type="match status" value="1"/>
</dbReference>